<evidence type="ECO:0000255" key="1">
    <source>
        <dbReference type="HAMAP-Rule" id="MF_00558"/>
    </source>
</evidence>
<gene>
    <name evidence="1" type="primary">sucC</name>
    <name type="ordered locus">BAbS19_I18070</name>
</gene>
<reference key="1">
    <citation type="journal article" date="2008" name="PLoS ONE">
        <title>Genome sequence of Brucella abortus vaccine strain S19 compared to virulent strains yields candidate virulence genes.</title>
        <authorList>
            <person name="Crasta O.R."/>
            <person name="Folkerts O."/>
            <person name="Fei Z."/>
            <person name="Mane S.P."/>
            <person name="Evans C."/>
            <person name="Martino-Catt S."/>
            <person name="Bricker B."/>
            <person name="Yu G."/>
            <person name="Du L."/>
            <person name="Sobral B.W."/>
        </authorList>
    </citation>
    <scope>NUCLEOTIDE SEQUENCE [LARGE SCALE GENOMIC DNA]</scope>
    <source>
        <strain>S19</strain>
    </source>
</reference>
<comment type="function">
    <text evidence="1">Succinyl-CoA synthetase functions in the citric acid cycle (TCA), coupling the hydrolysis of succinyl-CoA to the synthesis of either ATP or GTP and thus represents the only step of substrate-level phosphorylation in the TCA. The beta subunit provides nucleotide specificity of the enzyme and binds the substrate succinate, while the binding sites for coenzyme A and phosphate are found in the alpha subunit.</text>
</comment>
<comment type="catalytic activity">
    <reaction evidence="1">
        <text>succinate + ATP + CoA = succinyl-CoA + ADP + phosphate</text>
        <dbReference type="Rhea" id="RHEA:17661"/>
        <dbReference type="ChEBI" id="CHEBI:30031"/>
        <dbReference type="ChEBI" id="CHEBI:30616"/>
        <dbReference type="ChEBI" id="CHEBI:43474"/>
        <dbReference type="ChEBI" id="CHEBI:57287"/>
        <dbReference type="ChEBI" id="CHEBI:57292"/>
        <dbReference type="ChEBI" id="CHEBI:456216"/>
        <dbReference type="EC" id="6.2.1.5"/>
    </reaction>
    <physiologicalReaction direction="right-to-left" evidence="1">
        <dbReference type="Rhea" id="RHEA:17663"/>
    </physiologicalReaction>
</comment>
<comment type="catalytic activity">
    <reaction evidence="1">
        <text>GTP + succinate + CoA = succinyl-CoA + GDP + phosphate</text>
        <dbReference type="Rhea" id="RHEA:22120"/>
        <dbReference type="ChEBI" id="CHEBI:30031"/>
        <dbReference type="ChEBI" id="CHEBI:37565"/>
        <dbReference type="ChEBI" id="CHEBI:43474"/>
        <dbReference type="ChEBI" id="CHEBI:57287"/>
        <dbReference type="ChEBI" id="CHEBI:57292"/>
        <dbReference type="ChEBI" id="CHEBI:58189"/>
    </reaction>
    <physiologicalReaction direction="right-to-left" evidence="1">
        <dbReference type="Rhea" id="RHEA:22122"/>
    </physiologicalReaction>
</comment>
<comment type="cofactor">
    <cofactor evidence="1">
        <name>Mg(2+)</name>
        <dbReference type="ChEBI" id="CHEBI:18420"/>
    </cofactor>
    <text evidence="1">Binds 1 Mg(2+) ion per subunit.</text>
</comment>
<comment type="pathway">
    <text evidence="1">Carbohydrate metabolism; tricarboxylic acid cycle; succinate from succinyl-CoA (ligase route): step 1/1.</text>
</comment>
<comment type="subunit">
    <text evidence="1">Heterotetramer of two alpha and two beta subunits.</text>
</comment>
<comment type="similarity">
    <text evidence="1">Belongs to the succinate/malate CoA ligase beta subunit family.</text>
</comment>
<feature type="chain" id="PRO_1000129164" description="Succinate--CoA ligase [ADP-forming] subunit beta">
    <location>
        <begin position="1"/>
        <end position="398"/>
    </location>
</feature>
<feature type="domain" description="ATP-grasp" evidence="1">
    <location>
        <begin position="9"/>
        <end position="254"/>
    </location>
</feature>
<feature type="binding site" evidence="1">
    <location>
        <position position="46"/>
    </location>
    <ligand>
        <name>ATP</name>
        <dbReference type="ChEBI" id="CHEBI:30616"/>
    </ligand>
</feature>
<feature type="binding site" evidence="1">
    <location>
        <begin position="53"/>
        <end position="55"/>
    </location>
    <ligand>
        <name>ATP</name>
        <dbReference type="ChEBI" id="CHEBI:30616"/>
    </ligand>
</feature>
<feature type="binding site" evidence="1">
    <location>
        <position position="109"/>
    </location>
    <ligand>
        <name>ATP</name>
        <dbReference type="ChEBI" id="CHEBI:30616"/>
    </ligand>
</feature>
<feature type="binding site" evidence="1">
    <location>
        <position position="112"/>
    </location>
    <ligand>
        <name>ATP</name>
        <dbReference type="ChEBI" id="CHEBI:30616"/>
    </ligand>
</feature>
<feature type="binding site" evidence="1">
    <location>
        <position position="117"/>
    </location>
    <ligand>
        <name>ATP</name>
        <dbReference type="ChEBI" id="CHEBI:30616"/>
    </ligand>
</feature>
<feature type="binding site" evidence="1">
    <location>
        <position position="209"/>
    </location>
    <ligand>
        <name>Mg(2+)</name>
        <dbReference type="ChEBI" id="CHEBI:18420"/>
    </ligand>
</feature>
<feature type="binding site" evidence="1">
    <location>
        <position position="223"/>
    </location>
    <ligand>
        <name>Mg(2+)</name>
        <dbReference type="ChEBI" id="CHEBI:18420"/>
    </ligand>
</feature>
<feature type="binding site" evidence="1">
    <location>
        <position position="274"/>
    </location>
    <ligand>
        <name>substrate</name>
        <note>ligand shared with subunit alpha</note>
    </ligand>
</feature>
<feature type="binding site" evidence="1">
    <location>
        <begin position="331"/>
        <end position="333"/>
    </location>
    <ligand>
        <name>substrate</name>
        <note>ligand shared with subunit alpha</note>
    </ligand>
</feature>
<sequence length="398" mass="42527">MNIHEYQAKRLLHTYGAPIANGVAVYSVEQAEEWAKTLPGPLYVVKSQIHAGGRGKGKFKELPADAKGGVRLAKSVEEVVANAKEMLGNTLVTKQTGEAGKQVNRLYIEDGADIERELYLSILIDRSVGRPAFVVSTEGGMDIEAVAEETPEKIVTVAIDPAKGVTDEDANKLADALKLEGGAREDGLKLFPILYKAFTEKDMSLLEINPLIVMTNGRVRVLDAKVSFDNNALFRHPDIVELRDLTEEDPKEIEASKYDLAYVALDGNIGCMVNGAGLAMATMDIIKLYGAEPANFLDVGGGASKEKVTAAFKIITADPAVEGILVNIFGGIMKCDVIAEGVIAAVKEVGLKVPLVVRLEGTNVELGKKIINESGLNVISADDLDDAAQKIVAAVKGN</sequence>
<keyword id="KW-0067">ATP-binding</keyword>
<keyword id="KW-0436">Ligase</keyword>
<keyword id="KW-0460">Magnesium</keyword>
<keyword id="KW-0479">Metal-binding</keyword>
<keyword id="KW-0547">Nucleotide-binding</keyword>
<keyword id="KW-0816">Tricarboxylic acid cycle</keyword>
<name>SUCC_BRUA1</name>
<organism>
    <name type="scientific">Brucella abortus (strain S19)</name>
    <dbReference type="NCBI Taxonomy" id="430066"/>
    <lineage>
        <taxon>Bacteria</taxon>
        <taxon>Pseudomonadati</taxon>
        <taxon>Pseudomonadota</taxon>
        <taxon>Alphaproteobacteria</taxon>
        <taxon>Hyphomicrobiales</taxon>
        <taxon>Brucellaceae</taxon>
        <taxon>Brucella/Ochrobactrum group</taxon>
        <taxon>Brucella</taxon>
    </lineage>
</organism>
<proteinExistence type="inferred from homology"/>
<protein>
    <recommendedName>
        <fullName evidence="1">Succinate--CoA ligase [ADP-forming] subunit beta</fullName>
        <ecNumber evidence="1">6.2.1.5</ecNumber>
    </recommendedName>
    <alternativeName>
        <fullName evidence="1">Succinyl-CoA synthetase subunit beta</fullName>
        <shortName evidence="1">SCS-beta</shortName>
    </alternativeName>
</protein>
<dbReference type="EC" id="6.2.1.5" evidence="1"/>
<dbReference type="EMBL" id="CP000887">
    <property type="protein sequence ID" value="ACD73289.1"/>
    <property type="molecule type" value="Genomic_DNA"/>
</dbReference>
<dbReference type="RefSeq" id="WP_002964994.1">
    <property type="nucleotide sequence ID" value="NC_010742.1"/>
</dbReference>
<dbReference type="SMR" id="B2S880"/>
<dbReference type="GeneID" id="97534788"/>
<dbReference type="KEGG" id="bmc:BAbS19_I18070"/>
<dbReference type="HOGENOM" id="CLU_037430_0_2_5"/>
<dbReference type="UniPathway" id="UPA00223">
    <property type="reaction ID" value="UER00999"/>
</dbReference>
<dbReference type="Proteomes" id="UP000002565">
    <property type="component" value="Chromosome 1"/>
</dbReference>
<dbReference type="GO" id="GO:0005829">
    <property type="term" value="C:cytosol"/>
    <property type="evidence" value="ECO:0007669"/>
    <property type="project" value="TreeGrafter"/>
</dbReference>
<dbReference type="GO" id="GO:0042709">
    <property type="term" value="C:succinate-CoA ligase complex"/>
    <property type="evidence" value="ECO:0007669"/>
    <property type="project" value="TreeGrafter"/>
</dbReference>
<dbReference type="GO" id="GO:0005524">
    <property type="term" value="F:ATP binding"/>
    <property type="evidence" value="ECO:0007669"/>
    <property type="project" value="UniProtKB-UniRule"/>
</dbReference>
<dbReference type="GO" id="GO:0000287">
    <property type="term" value="F:magnesium ion binding"/>
    <property type="evidence" value="ECO:0007669"/>
    <property type="project" value="UniProtKB-UniRule"/>
</dbReference>
<dbReference type="GO" id="GO:0004775">
    <property type="term" value="F:succinate-CoA ligase (ADP-forming) activity"/>
    <property type="evidence" value="ECO:0007669"/>
    <property type="project" value="UniProtKB-UniRule"/>
</dbReference>
<dbReference type="GO" id="GO:0004776">
    <property type="term" value="F:succinate-CoA ligase (GDP-forming) activity"/>
    <property type="evidence" value="ECO:0007669"/>
    <property type="project" value="RHEA"/>
</dbReference>
<dbReference type="GO" id="GO:0006104">
    <property type="term" value="P:succinyl-CoA metabolic process"/>
    <property type="evidence" value="ECO:0007669"/>
    <property type="project" value="TreeGrafter"/>
</dbReference>
<dbReference type="GO" id="GO:0006099">
    <property type="term" value="P:tricarboxylic acid cycle"/>
    <property type="evidence" value="ECO:0007669"/>
    <property type="project" value="UniProtKB-UniRule"/>
</dbReference>
<dbReference type="FunFam" id="3.30.1490.20:FF:000002">
    <property type="entry name" value="Succinate--CoA ligase [ADP-forming] subunit beta"/>
    <property type="match status" value="1"/>
</dbReference>
<dbReference type="FunFam" id="3.30.470.20:FF:000002">
    <property type="entry name" value="Succinate--CoA ligase [ADP-forming] subunit beta"/>
    <property type="match status" value="1"/>
</dbReference>
<dbReference type="FunFam" id="3.40.50.261:FF:000001">
    <property type="entry name" value="Succinate--CoA ligase [ADP-forming] subunit beta"/>
    <property type="match status" value="1"/>
</dbReference>
<dbReference type="Gene3D" id="3.30.1490.20">
    <property type="entry name" value="ATP-grasp fold, A domain"/>
    <property type="match status" value="1"/>
</dbReference>
<dbReference type="Gene3D" id="3.30.470.20">
    <property type="entry name" value="ATP-grasp fold, B domain"/>
    <property type="match status" value="1"/>
</dbReference>
<dbReference type="Gene3D" id="3.40.50.261">
    <property type="entry name" value="Succinyl-CoA synthetase domains"/>
    <property type="match status" value="1"/>
</dbReference>
<dbReference type="HAMAP" id="MF_00558">
    <property type="entry name" value="Succ_CoA_beta"/>
    <property type="match status" value="1"/>
</dbReference>
<dbReference type="InterPro" id="IPR011761">
    <property type="entry name" value="ATP-grasp"/>
</dbReference>
<dbReference type="InterPro" id="IPR013650">
    <property type="entry name" value="ATP-grasp_succ-CoA_synth-type"/>
</dbReference>
<dbReference type="InterPro" id="IPR013815">
    <property type="entry name" value="ATP_grasp_subdomain_1"/>
</dbReference>
<dbReference type="InterPro" id="IPR017866">
    <property type="entry name" value="Succ-CoA_synthase_bsu_CS"/>
</dbReference>
<dbReference type="InterPro" id="IPR005811">
    <property type="entry name" value="SUCC_ACL_C"/>
</dbReference>
<dbReference type="InterPro" id="IPR005809">
    <property type="entry name" value="Succ_CoA_ligase-like_bsu"/>
</dbReference>
<dbReference type="InterPro" id="IPR016102">
    <property type="entry name" value="Succinyl-CoA_synth-like"/>
</dbReference>
<dbReference type="NCBIfam" id="NF001913">
    <property type="entry name" value="PRK00696.1"/>
    <property type="match status" value="1"/>
</dbReference>
<dbReference type="NCBIfam" id="TIGR01016">
    <property type="entry name" value="sucCoAbeta"/>
    <property type="match status" value="1"/>
</dbReference>
<dbReference type="PANTHER" id="PTHR11815:SF10">
    <property type="entry name" value="SUCCINATE--COA LIGASE [GDP-FORMING] SUBUNIT BETA, MITOCHONDRIAL"/>
    <property type="match status" value="1"/>
</dbReference>
<dbReference type="PANTHER" id="PTHR11815">
    <property type="entry name" value="SUCCINYL-COA SYNTHETASE BETA CHAIN"/>
    <property type="match status" value="1"/>
</dbReference>
<dbReference type="Pfam" id="PF08442">
    <property type="entry name" value="ATP-grasp_2"/>
    <property type="match status" value="1"/>
</dbReference>
<dbReference type="Pfam" id="PF00549">
    <property type="entry name" value="Ligase_CoA"/>
    <property type="match status" value="1"/>
</dbReference>
<dbReference type="PIRSF" id="PIRSF001554">
    <property type="entry name" value="SucCS_beta"/>
    <property type="match status" value="1"/>
</dbReference>
<dbReference type="SUPFAM" id="SSF56059">
    <property type="entry name" value="Glutathione synthetase ATP-binding domain-like"/>
    <property type="match status" value="1"/>
</dbReference>
<dbReference type="SUPFAM" id="SSF52210">
    <property type="entry name" value="Succinyl-CoA synthetase domains"/>
    <property type="match status" value="1"/>
</dbReference>
<dbReference type="PROSITE" id="PS50975">
    <property type="entry name" value="ATP_GRASP"/>
    <property type="match status" value="1"/>
</dbReference>
<dbReference type="PROSITE" id="PS01217">
    <property type="entry name" value="SUCCINYL_COA_LIG_3"/>
    <property type="match status" value="1"/>
</dbReference>
<accession>B2S880</accession>